<evidence type="ECO:0000250" key="1"/>
<evidence type="ECO:0000255" key="2">
    <source>
        <dbReference type="PROSITE-ProRule" id="PRU00176"/>
    </source>
</evidence>
<evidence type="ECO:0000256" key="3">
    <source>
        <dbReference type="SAM" id="MobiDB-lite"/>
    </source>
</evidence>
<evidence type="ECO:0000305" key="4"/>
<reference key="1">
    <citation type="journal article" date="2004" name="Nature">
        <title>Genome evolution in yeasts.</title>
        <authorList>
            <person name="Dujon B."/>
            <person name="Sherman D."/>
            <person name="Fischer G."/>
            <person name="Durrens P."/>
            <person name="Casaregola S."/>
            <person name="Lafontaine I."/>
            <person name="de Montigny J."/>
            <person name="Marck C."/>
            <person name="Neuveglise C."/>
            <person name="Talla E."/>
            <person name="Goffard N."/>
            <person name="Frangeul L."/>
            <person name="Aigle M."/>
            <person name="Anthouard V."/>
            <person name="Babour A."/>
            <person name="Barbe V."/>
            <person name="Barnay S."/>
            <person name="Blanchin S."/>
            <person name="Beckerich J.-M."/>
            <person name="Beyne E."/>
            <person name="Bleykasten C."/>
            <person name="Boisrame A."/>
            <person name="Boyer J."/>
            <person name="Cattolico L."/>
            <person name="Confanioleri F."/>
            <person name="de Daruvar A."/>
            <person name="Despons L."/>
            <person name="Fabre E."/>
            <person name="Fairhead C."/>
            <person name="Ferry-Dumazet H."/>
            <person name="Groppi A."/>
            <person name="Hantraye F."/>
            <person name="Hennequin C."/>
            <person name="Jauniaux N."/>
            <person name="Joyet P."/>
            <person name="Kachouri R."/>
            <person name="Kerrest A."/>
            <person name="Koszul R."/>
            <person name="Lemaire M."/>
            <person name="Lesur I."/>
            <person name="Ma L."/>
            <person name="Muller H."/>
            <person name="Nicaud J.-M."/>
            <person name="Nikolski M."/>
            <person name="Oztas S."/>
            <person name="Ozier-Kalogeropoulos O."/>
            <person name="Pellenz S."/>
            <person name="Potier S."/>
            <person name="Richard G.-F."/>
            <person name="Straub M.-L."/>
            <person name="Suleau A."/>
            <person name="Swennen D."/>
            <person name="Tekaia F."/>
            <person name="Wesolowski-Louvel M."/>
            <person name="Westhof E."/>
            <person name="Wirth B."/>
            <person name="Zeniou-Meyer M."/>
            <person name="Zivanovic Y."/>
            <person name="Bolotin-Fukuhara M."/>
            <person name="Thierry A."/>
            <person name="Bouchier C."/>
            <person name="Caudron B."/>
            <person name="Scarpelli C."/>
            <person name="Gaillardin C."/>
            <person name="Weissenbach J."/>
            <person name="Wincker P."/>
            <person name="Souciet J.-L."/>
        </authorList>
    </citation>
    <scope>NUCLEOTIDE SEQUENCE [LARGE SCALE GENOMIC DNA]</scope>
    <source>
        <strain>ATCC 2001 / BCRC 20586 / JCM 3761 / NBRC 0622 / NRRL Y-65 / CBS 138</strain>
    </source>
</reference>
<name>NOP12_CANGA</name>
<keyword id="KW-0539">Nucleus</keyword>
<keyword id="KW-1185">Reference proteome</keyword>
<keyword id="KW-0677">Repeat</keyword>
<keyword id="KW-0690">Ribosome biogenesis</keyword>
<keyword id="KW-0694">RNA-binding</keyword>
<keyword id="KW-0698">rRNA processing</keyword>
<comment type="function">
    <text evidence="1">Involved in pre-25S rRNA processing.</text>
</comment>
<comment type="subcellular location">
    <subcellularLocation>
        <location evidence="1">Nucleus</location>
        <location evidence="1">Nucleolus</location>
    </subcellularLocation>
</comment>
<comment type="similarity">
    <text evidence="4">Belongs to the RRM RBM34 family.</text>
</comment>
<organism>
    <name type="scientific">Candida glabrata (strain ATCC 2001 / BCRC 20586 / JCM 3761 / NBRC 0622 / NRRL Y-65 / CBS 138)</name>
    <name type="common">Yeast</name>
    <name type="synonym">Nakaseomyces glabratus</name>
    <dbReference type="NCBI Taxonomy" id="284593"/>
    <lineage>
        <taxon>Eukaryota</taxon>
        <taxon>Fungi</taxon>
        <taxon>Dikarya</taxon>
        <taxon>Ascomycota</taxon>
        <taxon>Saccharomycotina</taxon>
        <taxon>Saccharomycetes</taxon>
        <taxon>Saccharomycetales</taxon>
        <taxon>Saccharomycetaceae</taxon>
        <taxon>Nakaseomyces</taxon>
    </lineage>
</organism>
<accession>Q6FUS6</accession>
<dbReference type="EMBL" id="CR380952">
    <property type="protein sequence ID" value="CAG58942.1"/>
    <property type="molecule type" value="Genomic_DNA"/>
</dbReference>
<dbReference type="RefSeq" id="XP_446018.1">
    <property type="nucleotide sequence ID" value="XM_446018.1"/>
</dbReference>
<dbReference type="SMR" id="Q6FUS6"/>
<dbReference type="FunCoup" id="Q6FUS6">
    <property type="interactions" value="951"/>
</dbReference>
<dbReference type="STRING" id="284593.Q6FUS6"/>
<dbReference type="EnsemblFungi" id="CAGL0F01023g-T">
    <property type="protein sequence ID" value="CAGL0F01023g-T-p1"/>
    <property type="gene ID" value="CAGL0F01023g"/>
</dbReference>
<dbReference type="KEGG" id="cgr:2887717"/>
<dbReference type="CGD" id="CAL0130862">
    <property type="gene designation" value="CAGL0F01023g"/>
</dbReference>
<dbReference type="VEuPathDB" id="FungiDB:CAGL0F01023g"/>
<dbReference type="eggNOG" id="KOG0118">
    <property type="taxonomic scope" value="Eukaryota"/>
</dbReference>
<dbReference type="HOGENOM" id="CLU_006468_0_0_1"/>
<dbReference type="InParanoid" id="Q6FUS6"/>
<dbReference type="OMA" id="KCTDEQM"/>
<dbReference type="Proteomes" id="UP000002428">
    <property type="component" value="Chromosome F"/>
</dbReference>
<dbReference type="GO" id="GO:0005730">
    <property type="term" value="C:nucleolus"/>
    <property type="evidence" value="ECO:0007669"/>
    <property type="project" value="UniProtKB-SubCell"/>
</dbReference>
<dbReference type="GO" id="GO:0030684">
    <property type="term" value="C:preribosome"/>
    <property type="evidence" value="ECO:0007669"/>
    <property type="project" value="EnsemblFungi"/>
</dbReference>
<dbReference type="GO" id="GO:0019843">
    <property type="term" value="F:rRNA binding"/>
    <property type="evidence" value="ECO:0007669"/>
    <property type="project" value="EnsemblFungi"/>
</dbReference>
<dbReference type="GO" id="GO:0000463">
    <property type="term" value="P:maturation of LSU-rRNA from tricistronic rRNA transcript (SSU-rRNA, 5.8S rRNA, LSU-rRNA)"/>
    <property type="evidence" value="ECO:0007669"/>
    <property type="project" value="EnsemblFungi"/>
</dbReference>
<dbReference type="CDD" id="cd12669">
    <property type="entry name" value="RRM1_Nop12p_like"/>
    <property type="match status" value="1"/>
</dbReference>
<dbReference type="CDD" id="cd12670">
    <property type="entry name" value="RRM2_Nop12p_like"/>
    <property type="match status" value="1"/>
</dbReference>
<dbReference type="Gene3D" id="3.30.70.330">
    <property type="match status" value="2"/>
</dbReference>
<dbReference type="InterPro" id="IPR034777">
    <property type="entry name" value="Nop12_RRM1"/>
</dbReference>
<dbReference type="InterPro" id="IPR012677">
    <property type="entry name" value="Nucleotide-bd_a/b_plait_sf"/>
</dbReference>
<dbReference type="InterPro" id="IPR035979">
    <property type="entry name" value="RBD_domain_sf"/>
</dbReference>
<dbReference type="InterPro" id="IPR047189">
    <property type="entry name" value="RRM2_Nop12p-like"/>
</dbReference>
<dbReference type="InterPro" id="IPR000504">
    <property type="entry name" value="RRM_dom"/>
</dbReference>
<dbReference type="PANTHER" id="PTHR23236">
    <property type="entry name" value="EUKARYOTIC TRANSLATION INITIATION FACTOR 4B/4H"/>
    <property type="match status" value="1"/>
</dbReference>
<dbReference type="PANTHER" id="PTHR23236:SF25">
    <property type="entry name" value="RNA-BINDING PROTEIN 34"/>
    <property type="match status" value="1"/>
</dbReference>
<dbReference type="Pfam" id="PF00076">
    <property type="entry name" value="RRM_1"/>
    <property type="match status" value="1"/>
</dbReference>
<dbReference type="SMART" id="SM00360">
    <property type="entry name" value="RRM"/>
    <property type="match status" value="2"/>
</dbReference>
<dbReference type="SUPFAM" id="SSF54928">
    <property type="entry name" value="RNA-binding domain, RBD"/>
    <property type="match status" value="1"/>
</dbReference>
<dbReference type="PROSITE" id="PS50102">
    <property type="entry name" value="RRM"/>
    <property type="match status" value="1"/>
</dbReference>
<gene>
    <name type="primary">NOP12</name>
    <name type="ordered locus">CAGL0F01023g</name>
</gene>
<sequence>MNLFPETVATDDKVSQLFKTSNALDKKATPLIKVQKIEVIKKTDKDADGDEKMEDAASDDAKVKKPSKKKLAKKNKETKTPEQVPEEPEKLVEEGKESKKSTKEDEIEKASRTIFVGNLSNEVIISKSTYKLFQKLFNNIDDDDENKKLPIQSIRFRSVSFEDALPRKVAFVQQKLHKSRASVNAYIVYKEQSPLLNKLIKRLNGQVFSNRHLRVDSITHPAPHDKQRSVFVGNLDFEEDEESLWKHFGACGSIEYVRIVRDPKTNMGKGFAYVQFNELQSVSKALLLNEKPMISQNEHLKKRKLRVTRCKNIRKVEPTLKSGKYMTDGQKTKLGRAKKILNKAERSKLLKELTVEGIRATKDDSKPVLKKGKKERSKTGRVTKRSQAFKKSQQKK</sequence>
<protein>
    <recommendedName>
        <fullName>Nucleolar protein 12</fullName>
    </recommendedName>
</protein>
<proteinExistence type="inferred from homology"/>
<feature type="chain" id="PRO_0000081667" description="Nucleolar protein 12">
    <location>
        <begin position="1"/>
        <end position="396"/>
    </location>
</feature>
<feature type="domain" description="RRM 1" evidence="2">
    <location>
        <begin position="112"/>
        <end position="220"/>
    </location>
</feature>
<feature type="domain" description="RRM 2" evidence="2">
    <location>
        <begin position="228"/>
        <end position="312"/>
    </location>
</feature>
<feature type="region of interest" description="Disordered" evidence="3">
    <location>
        <begin position="43"/>
        <end position="104"/>
    </location>
</feature>
<feature type="region of interest" description="Disordered" evidence="3">
    <location>
        <begin position="361"/>
        <end position="396"/>
    </location>
</feature>
<feature type="compositionally biased region" description="Acidic residues" evidence="3">
    <location>
        <begin position="47"/>
        <end position="58"/>
    </location>
</feature>
<feature type="compositionally biased region" description="Basic residues" evidence="3">
    <location>
        <begin position="64"/>
        <end position="73"/>
    </location>
</feature>
<feature type="compositionally biased region" description="Basic and acidic residues" evidence="3">
    <location>
        <begin position="87"/>
        <end position="104"/>
    </location>
</feature>
<feature type="compositionally biased region" description="Basic residues" evidence="3">
    <location>
        <begin position="368"/>
        <end position="396"/>
    </location>
</feature>